<accession>C5BQ79</accession>
<reference key="1">
    <citation type="journal article" date="2009" name="PLoS ONE">
        <title>The complete genome of Teredinibacter turnerae T7901: an intracellular endosymbiont of marine wood-boring bivalves (shipworms).</title>
        <authorList>
            <person name="Yang J.C."/>
            <person name="Madupu R."/>
            <person name="Durkin A.S."/>
            <person name="Ekborg N.A."/>
            <person name="Pedamallu C.S."/>
            <person name="Hostetler J.B."/>
            <person name="Radune D."/>
            <person name="Toms B.S."/>
            <person name="Henrissat B."/>
            <person name="Coutinho P.M."/>
            <person name="Schwarz S."/>
            <person name="Field L."/>
            <person name="Trindade-Silva A.E."/>
            <person name="Soares C.A.G."/>
            <person name="Elshahawi S."/>
            <person name="Hanora A."/>
            <person name="Schmidt E.W."/>
            <person name="Haygood M.G."/>
            <person name="Posfai J."/>
            <person name="Benner J."/>
            <person name="Madinger C."/>
            <person name="Nove J."/>
            <person name="Anton B."/>
            <person name="Chaudhary K."/>
            <person name="Foster J."/>
            <person name="Holman A."/>
            <person name="Kumar S."/>
            <person name="Lessard P.A."/>
            <person name="Luyten Y.A."/>
            <person name="Slatko B."/>
            <person name="Wood N."/>
            <person name="Wu B."/>
            <person name="Teplitski M."/>
            <person name="Mougous J.D."/>
            <person name="Ward N."/>
            <person name="Eisen J.A."/>
            <person name="Badger J.H."/>
            <person name="Distel D.L."/>
        </authorList>
    </citation>
    <scope>NUCLEOTIDE SEQUENCE [LARGE SCALE GENOMIC DNA]</scope>
    <source>
        <strain>ATCC 39867 / T7901</strain>
    </source>
</reference>
<sequence>MAKKTLKVTQYKSASGRLEAHKACVRGLGLRRIGHTVEVEDTPSVRGMINKVNYMVKVEEE</sequence>
<protein>
    <recommendedName>
        <fullName evidence="1">Large ribosomal subunit protein uL30</fullName>
    </recommendedName>
    <alternativeName>
        <fullName evidence="2">50S ribosomal protein L30</fullName>
    </alternativeName>
</protein>
<comment type="subunit">
    <text evidence="1">Part of the 50S ribosomal subunit.</text>
</comment>
<comment type="similarity">
    <text evidence="1">Belongs to the universal ribosomal protein uL30 family.</text>
</comment>
<proteinExistence type="inferred from homology"/>
<gene>
    <name evidence="1" type="primary">rpmD</name>
    <name type="ordered locus">TERTU_0926</name>
</gene>
<name>RL30_TERTT</name>
<dbReference type="EMBL" id="CP001614">
    <property type="protein sequence ID" value="ACR11654.1"/>
    <property type="molecule type" value="Genomic_DNA"/>
</dbReference>
<dbReference type="RefSeq" id="WP_015817766.1">
    <property type="nucleotide sequence ID" value="NC_012997.1"/>
</dbReference>
<dbReference type="SMR" id="C5BQ79"/>
<dbReference type="STRING" id="377629.TERTU_0926"/>
<dbReference type="GeneID" id="58408700"/>
<dbReference type="GeneID" id="93857725"/>
<dbReference type="KEGG" id="ttu:TERTU_0926"/>
<dbReference type="eggNOG" id="COG1841">
    <property type="taxonomic scope" value="Bacteria"/>
</dbReference>
<dbReference type="HOGENOM" id="CLU_131047_1_4_6"/>
<dbReference type="OrthoDB" id="9812790at2"/>
<dbReference type="Proteomes" id="UP000009080">
    <property type="component" value="Chromosome"/>
</dbReference>
<dbReference type="GO" id="GO:0022625">
    <property type="term" value="C:cytosolic large ribosomal subunit"/>
    <property type="evidence" value="ECO:0007669"/>
    <property type="project" value="TreeGrafter"/>
</dbReference>
<dbReference type="GO" id="GO:0003735">
    <property type="term" value="F:structural constituent of ribosome"/>
    <property type="evidence" value="ECO:0007669"/>
    <property type="project" value="InterPro"/>
</dbReference>
<dbReference type="GO" id="GO:0006412">
    <property type="term" value="P:translation"/>
    <property type="evidence" value="ECO:0007669"/>
    <property type="project" value="UniProtKB-UniRule"/>
</dbReference>
<dbReference type="CDD" id="cd01658">
    <property type="entry name" value="Ribosomal_L30"/>
    <property type="match status" value="1"/>
</dbReference>
<dbReference type="FunFam" id="3.30.1390.20:FF:000001">
    <property type="entry name" value="50S ribosomal protein L30"/>
    <property type="match status" value="1"/>
</dbReference>
<dbReference type="Gene3D" id="3.30.1390.20">
    <property type="entry name" value="Ribosomal protein L30, ferredoxin-like fold domain"/>
    <property type="match status" value="1"/>
</dbReference>
<dbReference type="HAMAP" id="MF_01371_B">
    <property type="entry name" value="Ribosomal_uL30_B"/>
    <property type="match status" value="1"/>
</dbReference>
<dbReference type="InterPro" id="IPR036919">
    <property type="entry name" value="Ribo_uL30_ferredoxin-like_sf"/>
</dbReference>
<dbReference type="InterPro" id="IPR005996">
    <property type="entry name" value="Ribosomal_uL30_bac-type"/>
</dbReference>
<dbReference type="InterPro" id="IPR016082">
    <property type="entry name" value="Ribosomal_uL30_ferredoxin-like"/>
</dbReference>
<dbReference type="NCBIfam" id="TIGR01308">
    <property type="entry name" value="rpmD_bact"/>
    <property type="match status" value="1"/>
</dbReference>
<dbReference type="PANTHER" id="PTHR15892:SF2">
    <property type="entry name" value="LARGE RIBOSOMAL SUBUNIT PROTEIN UL30M"/>
    <property type="match status" value="1"/>
</dbReference>
<dbReference type="PANTHER" id="PTHR15892">
    <property type="entry name" value="MITOCHONDRIAL RIBOSOMAL PROTEIN L30"/>
    <property type="match status" value="1"/>
</dbReference>
<dbReference type="Pfam" id="PF00327">
    <property type="entry name" value="Ribosomal_L30"/>
    <property type="match status" value="1"/>
</dbReference>
<dbReference type="PIRSF" id="PIRSF002211">
    <property type="entry name" value="Ribosomal_L30_bac-type"/>
    <property type="match status" value="1"/>
</dbReference>
<dbReference type="SUPFAM" id="SSF55129">
    <property type="entry name" value="Ribosomal protein L30p/L7e"/>
    <property type="match status" value="1"/>
</dbReference>
<keyword id="KW-1185">Reference proteome</keyword>
<keyword id="KW-0687">Ribonucleoprotein</keyword>
<keyword id="KW-0689">Ribosomal protein</keyword>
<organism>
    <name type="scientific">Teredinibacter turnerae (strain ATCC 39867 / T7901)</name>
    <dbReference type="NCBI Taxonomy" id="377629"/>
    <lineage>
        <taxon>Bacteria</taxon>
        <taxon>Pseudomonadati</taxon>
        <taxon>Pseudomonadota</taxon>
        <taxon>Gammaproteobacteria</taxon>
        <taxon>Cellvibrionales</taxon>
        <taxon>Cellvibrionaceae</taxon>
        <taxon>Teredinibacter</taxon>
    </lineage>
</organism>
<evidence type="ECO:0000255" key="1">
    <source>
        <dbReference type="HAMAP-Rule" id="MF_01371"/>
    </source>
</evidence>
<evidence type="ECO:0000305" key="2"/>
<feature type="chain" id="PRO_1000215081" description="Large ribosomal subunit protein uL30">
    <location>
        <begin position="1"/>
        <end position="61"/>
    </location>
</feature>